<feature type="chain" id="PRO_0000254808" description="Cytochrome b">
    <location>
        <begin position="1"/>
        <end position="379"/>
    </location>
</feature>
<feature type="transmembrane region" description="Helical" evidence="2">
    <location>
        <begin position="33"/>
        <end position="53"/>
    </location>
</feature>
<feature type="transmembrane region" description="Helical" evidence="2">
    <location>
        <begin position="77"/>
        <end position="98"/>
    </location>
</feature>
<feature type="transmembrane region" description="Helical" evidence="2">
    <location>
        <begin position="113"/>
        <end position="133"/>
    </location>
</feature>
<feature type="transmembrane region" description="Helical" evidence="2">
    <location>
        <begin position="178"/>
        <end position="198"/>
    </location>
</feature>
<feature type="transmembrane region" description="Helical" evidence="2">
    <location>
        <begin position="226"/>
        <end position="246"/>
    </location>
</feature>
<feature type="transmembrane region" description="Helical" evidence="2">
    <location>
        <begin position="288"/>
        <end position="308"/>
    </location>
</feature>
<feature type="transmembrane region" description="Helical" evidence="2">
    <location>
        <begin position="320"/>
        <end position="340"/>
    </location>
</feature>
<feature type="transmembrane region" description="Helical" evidence="2">
    <location>
        <begin position="347"/>
        <end position="367"/>
    </location>
</feature>
<feature type="binding site" description="axial binding residue" evidence="2">
    <location>
        <position position="83"/>
    </location>
    <ligand>
        <name>heme b</name>
        <dbReference type="ChEBI" id="CHEBI:60344"/>
        <label>b562</label>
    </ligand>
    <ligandPart>
        <name>Fe</name>
        <dbReference type="ChEBI" id="CHEBI:18248"/>
    </ligandPart>
</feature>
<feature type="binding site" description="axial binding residue" evidence="2">
    <location>
        <position position="97"/>
    </location>
    <ligand>
        <name>heme b</name>
        <dbReference type="ChEBI" id="CHEBI:60344"/>
        <label>b566</label>
    </ligand>
    <ligandPart>
        <name>Fe</name>
        <dbReference type="ChEBI" id="CHEBI:18248"/>
    </ligandPart>
</feature>
<feature type="binding site" description="axial binding residue" evidence="2">
    <location>
        <position position="182"/>
    </location>
    <ligand>
        <name>heme b</name>
        <dbReference type="ChEBI" id="CHEBI:60344"/>
        <label>b562</label>
    </ligand>
    <ligandPart>
        <name>Fe</name>
        <dbReference type="ChEBI" id="CHEBI:18248"/>
    </ligandPart>
</feature>
<feature type="binding site" description="axial binding residue" evidence="2">
    <location>
        <position position="196"/>
    </location>
    <ligand>
        <name>heme b</name>
        <dbReference type="ChEBI" id="CHEBI:60344"/>
        <label>b566</label>
    </ligand>
    <ligandPart>
        <name>Fe</name>
        <dbReference type="ChEBI" id="CHEBI:18248"/>
    </ligandPart>
</feature>
<feature type="binding site" evidence="2">
    <location>
        <position position="201"/>
    </location>
    <ligand>
        <name>a ubiquinone</name>
        <dbReference type="ChEBI" id="CHEBI:16389"/>
    </ligand>
</feature>
<geneLocation type="mitochondrion"/>
<sequence length="379" mass="42642">MTNIRKSHPLLKIINHSFVDLPTPSSLSSWWNFGSLLGVCLIVQILTGLFLAMHYTSDTTTAFNSVTHVCRDVNYGWLLRYLHANGASMFFICLYMHVGRGLYYGSYTYTETWNIGILLLFTVMATAFMGYVLPWTQMSFWGATVITNLLSAIPYIGTDLVQWIWGGFSVDKATLTRFFAFHFLLPFIIAALAMVHLLFLHETGSNNPTGIPSNSDMIPFHPYYTIKDILGLLIMLTVLSALVLFSPDLLGDPDNYTPANPLNTPPHIKPEWYFLFAYAILRSIPNKLGGVLALVMSILILAVIPALHTSKQQSMTFRPLSQCLFWLLVADLLTLTWIGGQPVEYPYITIGQIASILYFSILLVLMPITSVVENHLLKW</sequence>
<proteinExistence type="inferred from homology"/>
<keyword id="KW-0249">Electron transport</keyword>
<keyword id="KW-0349">Heme</keyword>
<keyword id="KW-0408">Iron</keyword>
<keyword id="KW-0472">Membrane</keyword>
<keyword id="KW-0479">Metal-binding</keyword>
<keyword id="KW-0496">Mitochondrion</keyword>
<keyword id="KW-0999">Mitochondrion inner membrane</keyword>
<keyword id="KW-0679">Respiratory chain</keyword>
<keyword id="KW-0812">Transmembrane</keyword>
<keyword id="KW-1133">Transmembrane helix</keyword>
<keyword id="KW-0813">Transport</keyword>
<keyword id="KW-0830">Ubiquinone</keyword>
<reference key="1">
    <citation type="submission" date="2003-09" db="EMBL/GenBank/DDBJ databases">
        <title>Molecular evidence for unrecognized biodiversity in the bat genus Micronycteris (Phyllostomidae), with descriptions of two new subgenera.</title>
        <authorList>
            <person name="Porter C.A."/>
            <person name="Hoofer S.R."/>
            <person name="Cline C.A."/>
            <person name="Hoffmann F.G."/>
            <person name="Baker R.J."/>
        </authorList>
    </citation>
    <scope>NUCLEOTIDE SEQUENCE [GENOMIC DNA]</scope>
</reference>
<protein>
    <recommendedName>
        <fullName>Cytochrome b</fullName>
    </recommendedName>
    <alternativeName>
        <fullName>Complex III subunit 3</fullName>
    </alternativeName>
    <alternativeName>
        <fullName>Complex III subunit III</fullName>
    </alternativeName>
    <alternativeName>
        <fullName>Cytochrome b-c1 complex subunit 3</fullName>
    </alternativeName>
    <alternativeName>
        <fullName>Ubiquinol-cytochrome-c reductase complex cytochrome b subunit</fullName>
    </alternativeName>
</protein>
<organism>
    <name type="scientific">Lampronycteris brachyotis</name>
    <name type="common">Orange-throated big-eared bat</name>
    <name type="synonym">Micronycteris brachyotis</name>
    <dbReference type="NCBI Taxonomy" id="148063"/>
    <lineage>
        <taxon>Eukaryota</taxon>
        <taxon>Metazoa</taxon>
        <taxon>Chordata</taxon>
        <taxon>Craniata</taxon>
        <taxon>Vertebrata</taxon>
        <taxon>Euteleostomi</taxon>
        <taxon>Mammalia</taxon>
        <taxon>Eutheria</taxon>
        <taxon>Laurasiatheria</taxon>
        <taxon>Chiroptera</taxon>
        <taxon>Yangochiroptera</taxon>
        <taxon>Phyllostomidae</taxon>
        <taxon>Phyllostominae</taxon>
        <taxon>Micronycteris</taxon>
    </lineage>
</organism>
<accession>Q597E8</accession>
<evidence type="ECO:0000250" key="1"/>
<evidence type="ECO:0000250" key="2">
    <source>
        <dbReference type="UniProtKB" id="P00157"/>
    </source>
</evidence>
<evidence type="ECO:0000255" key="3">
    <source>
        <dbReference type="PROSITE-ProRule" id="PRU00967"/>
    </source>
</evidence>
<evidence type="ECO:0000255" key="4">
    <source>
        <dbReference type="PROSITE-ProRule" id="PRU00968"/>
    </source>
</evidence>
<name>CYB_LAMBR</name>
<gene>
    <name type="primary">MT-CYB</name>
    <name type="synonym">COB</name>
    <name type="synonym">CYTB</name>
    <name type="synonym">MTCYB</name>
</gene>
<comment type="function">
    <text evidence="2">Component of the ubiquinol-cytochrome c reductase complex (complex III or cytochrome b-c1 complex) that is part of the mitochondrial respiratory chain. The b-c1 complex mediates electron transfer from ubiquinol to cytochrome c. Contributes to the generation of a proton gradient across the mitochondrial membrane that is then used for ATP synthesis.</text>
</comment>
<comment type="cofactor">
    <cofactor evidence="2">
        <name>heme b</name>
        <dbReference type="ChEBI" id="CHEBI:60344"/>
    </cofactor>
    <text evidence="2">Binds 2 heme b groups non-covalently.</text>
</comment>
<comment type="subunit">
    <text evidence="2">The cytochrome bc1 complex contains 11 subunits: 3 respiratory subunits (MT-CYB, CYC1 and UQCRFS1), 2 core proteins (UQCRC1 and UQCRC2) and 6 low-molecular weight proteins (UQCRH/QCR6, UQCRB/QCR7, UQCRQ/QCR8, UQCR10/QCR9, UQCR11/QCR10 and a cleavage product of UQCRFS1). This cytochrome bc1 complex then forms a dimer.</text>
</comment>
<comment type="subcellular location">
    <subcellularLocation>
        <location evidence="2">Mitochondrion inner membrane</location>
        <topology evidence="2">Multi-pass membrane protein</topology>
    </subcellularLocation>
</comment>
<comment type="miscellaneous">
    <text evidence="1">Heme 1 (or BL or b562) is low-potential and absorbs at about 562 nm, and heme 2 (or BH or b566) is high-potential and absorbs at about 566 nm.</text>
</comment>
<comment type="similarity">
    <text evidence="3 4">Belongs to the cytochrome b family.</text>
</comment>
<comment type="caution">
    <text evidence="2">The full-length protein contains only eight transmembrane helices, not nine as predicted by bioinformatics tools.</text>
</comment>
<dbReference type="EMBL" id="AY380748">
    <property type="protein sequence ID" value="AAR91761.1"/>
    <property type="molecule type" value="Genomic_DNA"/>
</dbReference>
<dbReference type="SMR" id="Q597E8"/>
<dbReference type="GO" id="GO:0005743">
    <property type="term" value="C:mitochondrial inner membrane"/>
    <property type="evidence" value="ECO:0007669"/>
    <property type="project" value="UniProtKB-SubCell"/>
</dbReference>
<dbReference type="GO" id="GO:0045275">
    <property type="term" value="C:respiratory chain complex III"/>
    <property type="evidence" value="ECO:0007669"/>
    <property type="project" value="InterPro"/>
</dbReference>
<dbReference type="GO" id="GO:0046872">
    <property type="term" value="F:metal ion binding"/>
    <property type="evidence" value="ECO:0007669"/>
    <property type="project" value="UniProtKB-KW"/>
</dbReference>
<dbReference type="GO" id="GO:0008121">
    <property type="term" value="F:ubiquinol-cytochrome-c reductase activity"/>
    <property type="evidence" value="ECO:0007669"/>
    <property type="project" value="InterPro"/>
</dbReference>
<dbReference type="GO" id="GO:0006122">
    <property type="term" value="P:mitochondrial electron transport, ubiquinol to cytochrome c"/>
    <property type="evidence" value="ECO:0007669"/>
    <property type="project" value="TreeGrafter"/>
</dbReference>
<dbReference type="CDD" id="cd00290">
    <property type="entry name" value="cytochrome_b_C"/>
    <property type="match status" value="1"/>
</dbReference>
<dbReference type="CDD" id="cd00284">
    <property type="entry name" value="Cytochrome_b_N"/>
    <property type="match status" value="1"/>
</dbReference>
<dbReference type="FunFam" id="1.20.810.10:FF:000002">
    <property type="entry name" value="Cytochrome b"/>
    <property type="match status" value="1"/>
</dbReference>
<dbReference type="Gene3D" id="1.20.810.10">
    <property type="entry name" value="Cytochrome Bc1 Complex, Chain C"/>
    <property type="match status" value="1"/>
</dbReference>
<dbReference type="InterPro" id="IPR005798">
    <property type="entry name" value="Cyt_b/b6_C"/>
</dbReference>
<dbReference type="InterPro" id="IPR036150">
    <property type="entry name" value="Cyt_b/b6_C_sf"/>
</dbReference>
<dbReference type="InterPro" id="IPR005797">
    <property type="entry name" value="Cyt_b/b6_N"/>
</dbReference>
<dbReference type="InterPro" id="IPR027387">
    <property type="entry name" value="Cytb/b6-like_sf"/>
</dbReference>
<dbReference type="InterPro" id="IPR030689">
    <property type="entry name" value="Cytochrome_b"/>
</dbReference>
<dbReference type="InterPro" id="IPR048260">
    <property type="entry name" value="Cytochrome_b_C_euk/bac"/>
</dbReference>
<dbReference type="InterPro" id="IPR048259">
    <property type="entry name" value="Cytochrome_b_N_euk/bac"/>
</dbReference>
<dbReference type="InterPro" id="IPR016174">
    <property type="entry name" value="Di-haem_cyt_TM"/>
</dbReference>
<dbReference type="PANTHER" id="PTHR19271">
    <property type="entry name" value="CYTOCHROME B"/>
    <property type="match status" value="1"/>
</dbReference>
<dbReference type="PANTHER" id="PTHR19271:SF16">
    <property type="entry name" value="CYTOCHROME B"/>
    <property type="match status" value="1"/>
</dbReference>
<dbReference type="Pfam" id="PF00032">
    <property type="entry name" value="Cytochrom_B_C"/>
    <property type="match status" value="1"/>
</dbReference>
<dbReference type="Pfam" id="PF00033">
    <property type="entry name" value="Cytochrome_B"/>
    <property type="match status" value="1"/>
</dbReference>
<dbReference type="PIRSF" id="PIRSF038885">
    <property type="entry name" value="COB"/>
    <property type="match status" value="1"/>
</dbReference>
<dbReference type="SUPFAM" id="SSF81648">
    <property type="entry name" value="a domain/subunit of cytochrome bc1 complex (Ubiquinol-cytochrome c reductase)"/>
    <property type="match status" value="1"/>
</dbReference>
<dbReference type="SUPFAM" id="SSF81342">
    <property type="entry name" value="Transmembrane di-heme cytochromes"/>
    <property type="match status" value="1"/>
</dbReference>
<dbReference type="PROSITE" id="PS51003">
    <property type="entry name" value="CYTB_CTER"/>
    <property type="match status" value="1"/>
</dbReference>
<dbReference type="PROSITE" id="PS51002">
    <property type="entry name" value="CYTB_NTER"/>
    <property type="match status" value="1"/>
</dbReference>